<proteinExistence type="inferred from homology"/>
<feature type="chain" id="PRO_1000093289" description="Protein-L-isoaspartate O-methyltransferase">
    <location>
        <begin position="1"/>
        <end position="211"/>
    </location>
</feature>
<feature type="active site" evidence="1">
    <location>
        <position position="62"/>
    </location>
</feature>
<reference key="1">
    <citation type="submission" date="2006-09" db="EMBL/GenBank/DDBJ databases">
        <title>Complete sequence of chromosome 1 of Shewanella sp. ANA-3.</title>
        <authorList>
            <person name="Copeland A."/>
            <person name="Lucas S."/>
            <person name="Lapidus A."/>
            <person name="Barry K."/>
            <person name="Detter J.C."/>
            <person name="Glavina del Rio T."/>
            <person name="Hammon N."/>
            <person name="Israni S."/>
            <person name="Dalin E."/>
            <person name="Tice H."/>
            <person name="Pitluck S."/>
            <person name="Chertkov O."/>
            <person name="Brettin T."/>
            <person name="Bruce D."/>
            <person name="Han C."/>
            <person name="Tapia R."/>
            <person name="Gilna P."/>
            <person name="Schmutz J."/>
            <person name="Larimer F."/>
            <person name="Land M."/>
            <person name="Hauser L."/>
            <person name="Kyrpides N."/>
            <person name="Kim E."/>
            <person name="Newman D."/>
            <person name="Salticov C."/>
            <person name="Konstantinidis K."/>
            <person name="Klappenback J."/>
            <person name="Tiedje J."/>
            <person name="Richardson P."/>
        </authorList>
    </citation>
    <scope>NUCLEOTIDE SEQUENCE [LARGE SCALE GENOMIC DNA]</scope>
    <source>
        <strain>ANA-3</strain>
    </source>
</reference>
<evidence type="ECO:0000255" key="1">
    <source>
        <dbReference type="HAMAP-Rule" id="MF_00090"/>
    </source>
</evidence>
<protein>
    <recommendedName>
        <fullName evidence="1">Protein-L-isoaspartate O-methyltransferase</fullName>
        <ecNumber evidence="1">2.1.1.77</ecNumber>
    </recommendedName>
    <alternativeName>
        <fullName evidence="1">L-isoaspartyl protein carboxyl methyltransferase</fullName>
    </alternativeName>
    <alternativeName>
        <fullName evidence="1">Protein L-isoaspartyl methyltransferase</fullName>
    </alternativeName>
    <alternativeName>
        <fullName evidence="1">Protein-beta-aspartate methyltransferase</fullName>
        <shortName evidence="1">PIMT</shortName>
    </alternativeName>
</protein>
<organism>
    <name type="scientific">Shewanella sp. (strain ANA-3)</name>
    <dbReference type="NCBI Taxonomy" id="94122"/>
    <lineage>
        <taxon>Bacteria</taxon>
        <taxon>Pseudomonadati</taxon>
        <taxon>Pseudomonadota</taxon>
        <taxon>Gammaproteobacteria</taxon>
        <taxon>Alteromonadales</taxon>
        <taxon>Shewanellaceae</taxon>
        <taxon>Shewanella</taxon>
    </lineage>
</organism>
<accession>A0KU88</accession>
<sequence length="211" mass="23274">MTRVALTSAVNLAKKLQEAGIRHPAVLKAISRTPRELFLDNALAHKAYENTALPIGQGQTISQPYIVARMTELLLQHQPQKVLEVGTGSGYQAAILAQLVPELCTIERIKGLQIQARQRLKRLDLHNVSFKYGDGWQGWPNRSPFDGIMVTAAAAKVPEALLSQLAEGGVLIIPVGEETQQLMRFTRRSDRFSSEVIETVKFVPLINGELA</sequence>
<gene>
    <name evidence="1" type="primary">pcm</name>
    <name type="ordered locus">Shewana3_1122</name>
</gene>
<keyword id="KW-0963">Cytoplasm</keyword>
<keyword id="KW-0489">Methyltransferase</keyword>
<keyword id="KW-0949">S-adenosyl-L-methionine</keyword>
<keyword id="KW-0808">Transferase</keyword>
<name>PIMT_SHESA</name>
<dbReference type="EC" id="2.1.1.77" evidence="1"/>
<dbReference type="EMBL" id="CP000469">
    <property type="protein sequence ID" value="ABK47357.1"/>
    <property type="molecule type" value="Genomic_DNA"/>
</dbReference>
<dbReference type="RefSeq" id="WP_011716222.1">
    <property type="nucleotide sequence ID" value="NC_008577.1"/>
</dbReference>
<dbReference type="SMR" id="A0KU88"/>
<dbReference type="STRING" id="94122.Shewana3_1122"/>
<dbReference type="KEGG" id="shn:Shewana3_1122"/>
<dbReference type="eggNOG" id="COG2518">
    <property type="taxonomic scope" value="Bacteria"/>
</dbReference>
<dbReference type="HOGENOM" id="CLU_055432_2_0_6"/>
<dbReference type="OrthoDB" id="9810066at2"/>
<dbReference type="Proteomes" id="UP000002589">
    <property type="component" value="Chromosome"/>
</dbReference>
<dbReference type="GO" id="GO:0005737">
    <property type="term" value="C:cytoplasm"/>
    <property type="evidence" value="ECO:0007669"/>
    <property type="project" value="UniProtKB-SubCell"/>
</dbReference>
<dbReference type="GO" id="GO:0004719">
    <property type="term" value="F:protein-L-isoaspartate (D-aspartate) O-methyltransferase activity"/>
    <property type="evidence" value="ECO:0007669"/>
    <property type="project" value="UniProtKB-UniRule"/>
</dbReference>
<dbReference type="GO" id="GO:0032259">
    <property type="term" value="P:methylation"/>
    <property type="evidence" value="ECO:0007669"/>
    <property type="project" value="UniProtKB-KW"/>
</dbReference>
<dbReference type="GO" id="GO:0036211">
    <property type="term" value="P:protein modification process"/>
    <property type="evidence" value="ECO:0007669"/>
    <property type="project" value="UniProtKB-UniRule"/>
</dbReference>
<dbReference type="GO" id="GO:0030091">
    <property type="term" value="P:protein repair"/>
    <property type="evidence" value="ECO:0007669"/>
    <property type="project" value="UniProtKB-UniRule"/>
</dbReference>
<dbReference type="CDD" id="cd02440">
    <property type="entry name" value="AdoMet_MTases"/>
    <property type="match status" value="1"/>
</dbReference>
<dbReference type="FunFam" id="3.40.50.150:FF:000010">
    <property type="entry name" value="Protein-L-isoaspartate O-methyltransferase"/>
    <property type="match status" value="1"/>
</dbReference>
<dbReference type="Gene3D" id="3.40.50.150">
    <property type="entry name" value="Vaccinia Virus protein VP39"/>
    <property type="match status" value="1"/>
</dbReference>
<dbReference type="HAMAP" id="MF_00090">
    <property type="entry name" value="PIMT"/>
    <property type="match status" value="1"/>
</dbReference>
<dbReference type="InterPro" id="IPR000682">
    <property type="entry name" value="PCMT"/>
</dbReference>
<dbReference type="InterPro" id="IPR029063">
    <property type="entry name" value="SAM-dependent_MTases_sf"/>
</dbReference>
<dbReference type="NCBIfam" id="TIGR00080">
    <property type="entry name" value="pimt"/>
    <property type="match status" value="1"/>
</dbReference>
<dbReference type="NCBIfam" id="NF001453">
    <property type="entry name" value="PRK00312.1"/>
    <property type="match status" value="1"/>
</dbReference>
<dbReference type="PANTHER" id="PTHR11579">
    <property type="entry name" value="PROTEIN-L-ISOASPARTATE O-METHYLTRANSFERASE"/>
    <property type="match status" value="1"/>
</dbReference>
<dbReference type="PANTHER" id="PTHR11579:SF0">
    <property type="entry name" value="PROTEIN-L-ISOASPARTATE(D-ASPARTATE) O-METHYLTRANSFERASE"/>
    <property type="match status" value="1"/>
</dbReference>
<dbReference type="Pfam" id="PF01135">
    <property type="entry name" value="PCMT"/>
    <property type="match status" value="1"/>
</dbReference>
<dbReference type="SUPFAM" id="SSF53335">
    <property type="entry name" value="S-adenosyl-L-methionine-dependent methyltransferases"/>
    <property type="match status" value="1"/>
</dbReference>
<dbReference type="PROSITE" id="PS01279">
    <property type="entry name" value="PCMT"/>
    <property type="match status" value="1"/>
</dbReference>
<comment type="function">
    <text evidence="1">Catalyzes the methyl esterification of L-isoaspartyl residues in peptides and proteins that result from spontaneous decomposition of normal L-aspartyl and L-asparaginyl residues. It plays a role in the repair and/or degradation of damaged proteins.</text>
</comment>
<comment type="catalytic activity">
    <reaction evidence="1">
        <text>[protein]-L-isoaspartate + S-adenosyl-L-methionine = [protein]-L-isoaspartate alpha-methyl ester + S-adenosyl-L-homocysteine</text>
        <dbReference type="Rhea" id="RHEA:12705"/>
        <dbReference type="Rhea" id="RHEA-COMP:12143"/>
        <dbReference type="Rhea" id="RHEA-COMP:12144"/>
        <dbReference type="ChEBI" id="CHEBI:57856"/>
        <dbReference type="ChEBI" id="CHEBI:59789"/>
        <dbReference type="ChEBI" id="CHEBI:90596"/>
        <dbReference type="ChEBI" id="CHEBI:90598"/>
        <dbReference type="EC" id="2.1.1.77"/>
    </reaction>
</comment>
<comment type="subcellular location">
    <subcellularLocation>
        <location evidence="1">Cytoplasm</location>
    </subcellularLocation>
</comment>
<comment type="similarity">
    <text evidence="1">Belongs to the methyltransferase superfamily. L-isoaspartyl/D-aspartyl protein methyltransferase family.</text>
</comment>